<evidence type="ECO:0000255" key="1"/>
<evidence type="ECO:0000255" key="2">
    <source>
        <dbReference type="HAMAP-Rule" id="MF_01207"/>
    </source>
</evidence>
<evidence type="ECO:0000303" key="3">
    <source>
    </source>
</evidence>
<evidence type="ECO:0000305" key="4">
    <source>
    </source>
</evidence>
<comment type="function">
    <text evidence="2 4">Part of the MsrPQ system that repairs oxidized periplasmic proteins containing methionine sulfoxide residues (Met-O), using respiratory chain electrons. Thus protects these proteins from oxidative-stress damage caused by reactive species of oxygen and chlorine generated by the host defense mechanisms. MsrPQ is essential for the maintenance of envelope integrity under bleach stress, rescuing a wide series of structurally unrelated periplasmic proteins from methionine oxidation. MsrQ provides electrons for reduction to the reductase catalytic subunit MsrP, using the quinone pool of the respiratory chain (By similarity). Probably involved in protection against reactive chlorine species (RCS) generated by chlorite and hypochlorite (PubMed:25968643).</text>
</comment>
<comment type="subunit">
    <text evidence="2">Heterodimer of a catalytic subunit (MsrP) and a heme-binding subunit (MsrQ).</text>
</comment>
<comment type="subcellular location">
    <subcellularLocation>
        <location evidence="2">Cell inner membrane</location>
        <topology evidence="2">Multi-pass membrane protein</topology>
    </subcellularLocation>
</comment>
<comment type="similarity">
    <text evidence="2">Belongs to the MsrQ family.</text>
</comment>
<keyword id="KW-0997">Cell inner membrane</keyword>
<keyword id="KW-1003">Cell membrane</keyword>
<keyword id="KW-0249">Electron transport</keyword>
<keyword id="KW-0285">Flavoprotein</keyword>
<keyword id="KW-0288">FMN</keyword>
<keyword id="KW-0349">Heme</keyword>
<keyword id="KW-0408">Iron</keyword>
<keyword id="KW-0472">Membrane</keyword>
<keyword id="KW-0479">Metal-binding</keyword>
<keyword id="KW-0812">Transmembrane</keyword>
<keyword id="KW-1133">Transmembrane helix</keyword>
<keyword id="KW-0813">Transport</keyword>
<reference key="1">
    <citation type="journal article" date="2012" name="J. Bacteriol.">
        <title>Complete genome sequence of the anaerobic perchlorate-reducing bacterium Azospira suillum strain PS.</title>
        <authorList>
            <person name="Byrne-Bailey K.G."/>
            <person name="Coates J.D."/>
        </authorList>
    </citation>
    <scope>NUCLEOTIDE SEQUENCE [LARGE SCALE GENOMIC DNA]</scope>
    <source>
        <strain>ATCC BAA-33 / DSM 13638 / PS</strain>
    </source>
</reference>
<reference key="2">
    <citation type="journal article" date="2015" name="MBio">
        <title>Novel mechanism for scavenging of hypochlorite involving a periplasmic methionine-rich peptide and methionine sulfoxide reductase.</title>
        <authorList>
            <person name="Melnyk R.A."/>
            <person name="Youngblut M.D."/>
            <person name="Clark I.C."/>
            <person name="Carlson H.K."/>
            <person name="Wetmore K.M."/>
            <person name="Price M.N."/>
            <person name="Iavarone A.T."/>
            <person name="Deutschbauer A.M."/>
            <person name="Arkin A.P."/>
            <person name="Coates J.D."/>
        </authorList>
    </citation>
    <scope>FUNCTION</scope>
    <source>
        <strain>ATCC BAA-33 / DSM 13638 / PS</strain>
    </source>
</reference>
<protein>
    <recommendedName>
        <fullName evidence="2">Protein-methionine-sulfoxide reductase heme-binding subunit MsrQ</fullName>
    </recommendedName>
    <alternativeName>
        <fullName evidence="2">Flavocytochrome MsrQ</fullName>
    </alternativeName>
</protein>
<gene>
    <name evidence="2" type="primary">msrQ</name>
    <name evidence="3" type="synonym">yedZ2</name>
    <name type="ordered locus">Dsui_1299</name>
</gene>
<organism>
    <name type="scientific">Azospira oryzae (strain ATCC BAA-33 / DSM 13638 / PS)</name>
    <name type="common">Dechlorosoma suillum</name>
    <dbReference type="NCBI Taxonomy" id="640081"/>
    <lineage>
        <taxon>Bacteria</taxon>
        <taxon>Pseudomonadati</taxon>
        <taxon>Pseudomonadota</taxon>
        <taxon>Betaproteobacteria</taxon>
        <taxon>Rhodocyclales</taxon>
        <taxon>Rhodocyclaceae</taxon>
        <taxon>Azospira</taxon>
    </lineage>
</organism>
<name>MSRQ_AZOOP</name>
<dbReference type="EMBL" id="CP003153">
    <property type="protein sequence ID" value="AEV25699.1"/>
    <property type="molecule type" value="Genomic_DNA"/>
</dbReference>
<dbReference type="RefSeq" id="WP_014236400.1">
    <property type="nucleotide sequence ID" value="NC_016616.1"/>
</dbReference>
<dbReference type="SMR" id="G8QMC1"/>
<dbReference type="STRING" id="640081.Dsui_1299"/>
<dbReference type="KEGG" id="dsu:Dsui_1299"/>
<dbReference type="eggNOG" id="COG2717">
    <property type="taxonomic scope" value="Bacteria"/>
</dbReference>
<dbReference type="HOGENOM" id="CLU_080662_0_1_4"/>
<dbReference type="OrthoDB" id="9788328at2"/>
<dbReference type="Proteomes" id="UP000005633">
    <property type="component" value="Chromosome"/>
</dbReference>
<dbReference type="GO" id="GO:0005886">
    <property type="term" value="C:plasma membrane"/>
    <property type="evidence" value="ECO:0007669"/>
    <property type="project" value="UniProtKB-SubCell"/>
</dbReference>
<dbReference type="GO" id="GO:0009055">
    <property type="term" value="F:electron transfer activity"/>
    <property type="evidence" value="ECO:0007669"/>
    <property type="project" value="UniProtKB-UniRule"/>
</dbReference>
<dbReference type="GO" id="GO:0010181">
    <property type="term" value="F:FMN binding"/>
    <property type="evidence" value="ECO:0007669"/>
    <property type="project" value="UniProtKB-UniRule"/>
</dbReference>
<dbReference type="GO" id="GO:0020037">
    <property type="term" value="F:heme binding"/>
    <property type="evidence" value="ECO:0007669"/>
    <property type="project" value="UniProtKB-UniRule"/>
</dbReference>
<dbReference type="GO" id="GO:0046872">
    <property type="term" value="F:metal ion binding"/>
    <property type="evidence" value="ECO:0007669"/>
    <property type="project" value="UniProtKB-KW"/>
</dbReference>
<dbReference type="GO" id="GO:0016679">
    <property type="term" value="F:oxidoreductase activity, acting on diphenols and related substances as donors"/>
    <property type="evidence" value="ECO:0007669"/>
    <property type="project" value="TreeGrafter"/>
</dbReference>
<dbReference type="GO" id="GO:0030091">
    <property type="term" value="P:protein repair"/>
    <property type="evidence" value="ECO:0007669"/>
    <property type="project" value="UniProtKB-UniRule"/>
</dbReference>
<dbReference type="HAMAP" id="MF_01207">
    <property type="entry name" value="MsrQ"/>
    <property type="match status" value="1"/>
</dbReference>
<dbReference type="InterPro" id="IPR013130">
    <property type="entry name" value="Fe3_Rdtase_TM_dom"/>
</dbReference>
<dbReference type="InterPro" id="IPR022837">
    <property type="entry name" value="MsrQ-like"/>
</dbReference>
<dbReference type="PANTHER" id="PTHR36964">
    <property type="entry name" value="PROTEIN-METHIONINE-SULFOXIDE REDUCTASE HEME-BINDING SUBUNIT MSRQ"/>
    <property type="match status" value="1"/>
</dbReference>
<dbReference type="PANTHER" id="PTHR36964:SF1">
    <property type="entry name" value="PROTEIN-METHIONINE-SULFOXIDE REDUCTASE HEME-BINDING SUBUNIT MSRQ"/>
    <property type="match status" value="1"/>
</dbReference>
<dbReference type="Pfam" id="PF01794">
    <property type="entry name" value="Ferric_reduct"/>
    <property type="match status" value="1"/>
</dbReference>
<accession>G8QMC1</accession>
<feature type="chain" id="PRO_0000440892" description="Protein-methionine-sulfoxide reductase heme-binding subunit MsrQ">
    <location>
        <begin position="1"/>
        <end position="233"/>
    </location>
</feature>
<feature type="transmembrane region" description="Helical" evidence="1">
    <location>
        <begin position="13"/>
        <end position="33"/>
    </location>
</feature>
<feature type="transmembrane region" description="Helical" evidence="1">
    <location>
        <begin position="44"/>
        <end position="64"/>
    </location>
</feature>
<feature type="transmembrane region" description="Helical" evidence="1">
    <location>
        <begin position="81"/>
        <end position="101"/>
    </location>
</feature>
<feature type="transmembrane region" description="Helical" evidence="1">
    <location>
        <begin position="117"/>
        <end position="137"/>
    </location>
</feature>
<feature type="transmembrane region" description="Helical" evidence="1">
    <location>
        <begin position="151"/>
        <end position="171"/>
    </location>
</feature>
<feature type="transmembrane region" description="Helical" evidence="1">
    <location>
        <begin position="174"/>
        <end position="194"/>
    </location>
</feature>
<feature type="domain" description="Ferric oxidoreductase" evidence="1">
    <location>
        <begin position="50"/>
        <end position="164"/>
    </location>
</feature>
<sequence length="233" mass="26320">MTFQPTPRQLSAIKAALFLLTLLPALHYAHGLWSDSLGANPIEALTRGMGIWTLNFLFLTLCVSPLRKLSGWHWLLRLRRMLGLTAFAYGCLHLLTYLWLDQFWDVDAIARDIWKRPFITVGATAFLLMLPLALTSSHAAIRSLGGKRWQSLHRAVYAVAILGVVHYLWLVKRVALLDPIIYALVLAILLGWRVVERIRLNGPWPTRSTPPAVQPVVFMKRDAVAALGEPKKR</sequence>
<proteinExistence type="inferred from homology"/>